<proteinExistence type="inferred from homology"/>
<organism evidence="6">
    <name type="scientific">Drosophila paulistorum</name>
    <name type="common">Fruit fly</name>
    <dbReference type="NCBI Taxonomy" id="46793"/>
    <lineage>
        <taxon>Eukaryota</taxon>
        <taxon>Metazoa</taxon>
        <taxon>Ecdysozoa</taxon>
        <taxon>Arthropoda</taxon>
        <taxon>Hexapoda</taxon>
        <taxon>Insecta</taxon>
        <taxon>Pterygota</taxon>
        <taxon>Neoptera</taxon>
        <taxon>Endopterygota</taxon>
        <taxon>Diptera</taxon>
        <taxon>Brachycera</taxon>
        <taxon>Muscomorpha</taxon>
        <taxon>Ephydroidea</taxon>
        <taxon>Drosophilidae</taxon>
        <taxon>Drosophila</taxon>
        <taxon>Sophophora</taxon>
    </lineage>
</organism>
<accession>Q9U8S9</accession>
<accession>Q9NG38</accession>
<feature type="chain" id="PRO_0000054492" description="Alcohol dehydrogenase">
    <location>
        <begin position="1"/>
        <end position="254"/>
    </location>
</feature>
<feature type="active site" description="Proton acceptor" evidence="3">
    <location>
        <position position="151"/>
    </location>
</feature>
<feature type="binding site" evidence="2">
    <location>
        <begin position="9"/>
        <end position="32"/>
    </location>
    <ligand>
        <name>NAD(+)</name>
        <dbReference type="ChEBI" id="CHEBI:57540"/>
    </ligand>
</feature>
<feature type="binding site" evidence="1">
    <location>
        <position position="138"/>
    </location>
    <ligand>
        <name>substrate</name>
    </ligand>
</feature>
<feature type="sequence conflict" description="In Ref. 3; AAF72720." evidence="5" ref="3">
    <original>N</original>
    <variation>K</variation>
    <location>
        <position position="41"/>
    </location>
</feature>
<feature type="sequence conflict" description="In Ref. 3; AAF72720." evidence="5" ref="3">
    <original>I</original>
    <variation>M</variation>
    <location>
        <position position="45"/>
    </location>
</feature>
<feature type="sequence conflict" description="In Ref. 3; AAF72720." evidence="5" ref="3">
    <original>T</original>
    <variation>I</variation>
    <location>
        <position position="56"/>
    </location>
</feature>
<feature type="sequence conflict" description="In Ref. 3; AAF72720." evidence="5" ref="3">
    <original>N</original>
    <variation>K</variation>
    <location>
        <position position="113"/>
    </location>
</feature>
<feature type="sequence conflict" description="In Ref. 3; AAF72720." evidence="5" ref="3">
    <original>V</original>
    <variation>I</variation>
    <location>
        <position position="132"/>
    </location>
</feature>
<feature type="sequence conflict" description="In Ref. 3; AAF72720." evidence="5" ref="3">
    <original>I</original>
    <variation>M</variation>
    <location>
        <position position="145"/>
    </location>
</feature>
<feature type="sequence conflict" description="In Ref. 2; BAA85831." evidence="5" ref="2">
    <original>E</original>
    <variation>G</variation>
    <location>
        <position position="242"/>
    </location>
</feature>
<keyword id="KW-0520">NAD</keyword>
<keyword id="KW-0560">Oxidoreductase</keyword>
<evidence type="ECO:0000250" key="1"/>
<evidence type="ECO:0000250" key="2">
    <source>
        <dbReference type="UniProtKB" id="Q05114"/>
    </source>
</evidence>
<evidence type="ECO:0000255" key="3">
    <source>
        <dbReference type="PROSITE-ProRule" id="PRU10001"/>
    </source>
</evidence>
<evidence type="ECO:0000255" key="4">
    <source>
        <dbReference type="RuleBase" id="RU000363"/>
    </source>
</evidence>
<evidence type="ECO:0000305" key="5"/>
<evidence type="ECO:0000312" key="6">
    <source>
        <dbReference type="EMBL" id="AAD00796.1"/>
    </source>
</evidence>
<evidence type="ECO:0000312" key="7">
    <source>
        <dbReference type="EMBL" id="AAD00797.1"/>
    </source>
</evidence>
<evidence type="ECO:0000312" key="8">
    <source>
        <dbReference type="EMBL" id="AAD00798.1"/>
    </source>
</evidence>
<reference evidence="6" key="1">
    <citation type="journal article" date="1998" name="Evolution">
        <title>A molecular phylogeny of the Drosophila willistoni group: conflicts between species concepts?</title>
        <authorList>
            <person name="Gleason J.M."/>
            <person name="Griffith E.C."/>
            <person name="Powell J.R."/>
        </authorList>
        <dbReference type="AGRICOLA" id="IND21806050"/>
    </citation>
    <scope>NUCLEOTIDE SEQUENCE [GENOMIC DNA]</scope>
    <source>
        <strain evidence="6">0771.4</strain>
        <strain evidence="7">Andean-Brazilian</strain>
        <strain evidence="8">Tame</strain>
    </source>
</reference>
<reference evidence="5" key="2">
    <citation type="journal article" date="2000" name="J. Mol. Evol.">
        <title>Phylogenetic position of the subgenus Lordiphosa of the genus Drosophila (Diptera: Drosophilidae) inferred from alcohol dehydrogenase (Adh) gene sequences.</title>
        <authorList>
            <person name="Katoh T."/>
            <person name="Tamura K."/>
            <person name="Aotsuka T."/>
        </authorList>
    </citation>
    <scope>NUCLEOTIDE SEQUENCE [GENOMIC DNA] OF 12-248</scope>
</reference>
<reference evidence="5" key="3">
    <citation type="thesis" date="2000" institute="University of Arizona / Tucson" country="United States">
        <title>Phylogenetic relationships of flies in family Drosophilidae inferred by combined analysis of morphological and molecular characters.</title>
        <authorList>
            <person name="O'Grady P.M."/>
        </authorList>
    </citation>
    <scope>NUCLEOTIDE SEQUENCE [GENOMIC DNA] OF 32-166</scope>
</reference>
<dbReference type="EC" id="1.1.1.1"/>
<dbReference type="EMBL" id="U95270">
    <property type="protein sequence ID" value="AAD00796.1"/>
    <property type="molecule type" value="Genomic_DNA"/>
</dbReference>
<dbReference type="EMBL" id="U95271">
    <property type="protein sequence ID" value="AAD00797.1"/>
    <property type="molecule type" value="Genomic_DNA"/>
</dbReference>
<dbReference type="EMBL" id="U95272">
    <property type="protein sequence ID" value="AAD00798.1"/>
    <property type="molecule type" value="Genomic_DNA"/>
</dbReference>
<dbReference type="EMBL" id="AB026529">
    <property type="protein sequence ID" value="BAA85831.1"/>
    <property type="molecule type" value="Genomic_DNA"/>
</dbReference>
<dbReference type="EMBL" id="AF264078">
    <property type="protein sequence ID" value="AAF72720.1"/>
    <property type="molecule type" value="Genomic_DNA"/>
</dbReference>
<dbReference type="SMR" id="Q9U8S9"/>
<dbReference type="GO" id="GO:0005737">
    <property type="term" value="C:cytoplasm"/>
    <property type="evidence" value="ECO:0007669"/>
    <property type="project" value="TreeGrafter"/>
</dbReference>
<dbReference type="GO" id="GO:0004022">
    <property type="term" value="F:alcohol dehydrogenase (NAD+) activity"/>
    <property type="evidence" value="ECO:0000250"/>
    <property type="project" value="UniProtKB"/>
</dbReference>
<dbReference type="GO" id="GO:0046164">
    <property type="term" value="P:alcohol catabolic process"/>
    <property type="evidence" value="ECO:0000250"/>
    <property type="project" value="UniProtKB"/>
</dbReference>
<dbReference type="CDD" id="cd05323">
    <property type="entry name" value="ADH_SDR_c_like"/>
    <property type="match status" value="1"/>
</dbReference>
<dbReference type="FunFam" id="3.40.50.720:FF:000302">
    <property type="entry name" value="Alcohol dehydrogenase"/>
    <property type="match status" value="1"/>
</dbReference>
<dbReference type="Gene3D" id="3.40.50.720">
    <property type="entry name" value="NAD(P)-binding Rossmann-like Domain"/>
    <property type="match status" value="1"/>
</dbReference>
<dbReference type="InterPro" id="IPR002425">
    <property type="entry name" value="ADH_Drosophila-type"/>
</dbReference>
<dbReference type="InterPro" id="IPR036291">
    <property type="entry name" value="NAD(P)-bd_dom_sf"/>
</dbReference>
<dbReference type="InterPro" id="IPR020904">
    <property type="entry name" value="Sc_DH/Rdtase_CS"/>
</dbReference>
<dbReference type="InterPro" id="IPR002347">
    <property type="entry name" value="SDR_fam"/>
</dbReference>
<dbReference type="PANTHER" id="PTHR44229">
    <property type="entry name" value="15-HYDROXYPROSTAGLANDIN DEHYDROGENASE [NAD(+)]"/>
    <property type="match status" value="1"/>
</dbReference>
<dbReference type="PANTHER" id="PTHR44229:SF8">
    <property type="entry name" value="ALCOHOL DEHYDROGENASE-RELATED"/>
    <property type="match status" value="1"/>
</dbReference>
<dbReference type="Pfam" id="PF00106">
    <property type="entry name" value="adh_short"/>
    <property type="match status" value="1"/>
</dbReference>
<dbReference type="PRINTS" id="PR01168">
    <property type="entry name" value="ALCDHDRGNASE"/>
</dbReference>
<dbReference type="PRINTS" id="PR01167">
    <property type="entry name" value="INSADHFAMILY"/>
</dbReference>
<dbReference type="PRINTS" id="PR00080">
    <property type="entry name" value="SDRFAMILY"/>
</dbReference>
<dbReference type="SUPFAM" id="SSF51735">
    <property type="entry name" value="NAD(P)-binding Rossmann-fold domains"/>
    <property type="match status" value="1"/>
</dbReference>
<dbReference type="PROSITE" id="PS00061">
    <property type="entry name" value="ADH_SHORT"/>
    <property type="match status" value="1"/>
</dbReference>
<sequence>MALTNKNIIFVAGLGGIGLDTSRELVKRDLKNLVILDRIDNPAAIAELKAINPKVTVTFYPYDVTTPLTETTKLLKTIFAQLKTVDVLINGAGILDDHQIERTIAVNFTGLVNTTTAILDFWDKRKGGPGGVICNIGSVTGFNAIYQVPVYSASKAAVVSFTQSIAKLANVTGVTAFTVNPGITKTTLVHKFNSWLDVETRVAEKLLEHPTQTTLACAQNFVKAIELNKNGAIWKLDLGTLEPIEWTKHWDSGI</sequence>
<gene>
    <name type="primary">Adh</name>
</gene>
<comment type="catalytic activity">
    <reaction evidence="3 5">
        <text>a primary alcohol + NAD(+) = an aldehyde + NADH + H(+)</text>
        <dbReference type="Rhea" id="RHEA:10736"/>
        <dbReference type="ChEBI" id="CHEBI:15378"/>
        <dbReference type="ChEBI" id="CHEBI:15734"/>
        <dbReference type="ChEBI" id="CHEBI:17478"/>
        <dbReference type="ChEBI" id="CHEBI:57540"/>
        <dbReference type="ChEBI" id="CHEBI:57945"/>
        <dbReference type="EC" id="1.1.1.1"/>
    </reaction>
</comment>
<comment type="catalytic activity">
    <reaction evidence="3 5">
        <text>a secondary alcohol + NAD(+) = a ketone + NADH + H(+)</text>
        <dbReference type="Rhea" id="RHEA:10740"/>
        <dbReference type="ChEBI" id="CHEBI:15378"/>
        <dbReference type="ChEBI" id="CHEBI:17087"/>
        <dbReference type="ChEBI" id="CHEBI:35681"/>
        <dbReference type="ChEBI" id="CHEBI:57540"/>
        <dbReference type="ChEBI" id="CHEBI:57945"/>
        <dbReference type="EC" id="1.1.1.1"/>
    </reaction>
</comment>
<comment type="subunit">
    <text evidence="5">Homodimer.</text>
</comment>
<comment type="similarity">
    <text evidence="4 5">Belongs to the short-chain dehydrogenases/reductases (SDR) family.</text>
</comment>
<name>ADH_DROPU</name>
<protein>
    <recommendedName>
        <fullName>Alcohol dehydrogenase</fullName>
        <ecNumber>1.1.1.1</ecNumber>
    </recommendedName>
</protein>